<gene>
    <name evidence="1" type="primary">glyA</name>
    <name type="ordered locus">SeSA_A2796</name>
</gene>
<dbReference type="EC" id="2.1.2.1" evidence="1"/>
<dbReference type="EMBL" id="CP001127">
    <property type="protein sequence ID" value="ACF89723.1"/>
    <property type="molecule type" value="Genomic_DNA"/>
</dbReference>
<dbReference type="RefSeq" id="WP_000919173.1">
    <property type="nucleotide sequence ID" value="NC_011094.1"/>
</dbReference>
<dbReference type="SMR" id="B4TRY8"/>
<dbReference type="KEGG" id="sew:SeSA_A2796"/>
<dbReference type="HOGENOM" id="CLU_022477_2_1_6"/>
<dbReference type="UniPathway" id="UPA00193"/>
<dbReference type="UniPathway" id="UPA00288">
    <property type="reaction ID" value="UER01023"/>
</dbReference>
<dbReference type="Proteomes" id="UP000001865">
    <property type="component" value="Chromosome"/>
</dbReference>
<dbReference type="GO" id="GO:0005829">
    <property type="term" value="C:cytosol"/>
    <property type="evidence" value="ECO:0007669"/>
    <property type="project" value="TreeGrafter"/>
</dbReference>
<dbReference type="GO" id="GO:0004372">
    <property type="term" value="F:glycine hydroxymethyltransferase activity"/>
    <property type="evidence" value="ECO:0007669"/>
    <property type="project" value="UniProtKB-UniRule"/>
</dbReference>
<dbReference type="GO" id="GO:0030170">
    <property type="term" value="F:pyridoxal phosphate binding"/>
    <property type="evidence" value="ECO:0007669"/>
    <property type="project" value="UniProtKB-UniRule"/>
</dbReference>
<dbReference type="GO" id="GO:0019264">
    <property type="term" value="P:glycine biosynthetic process from serine"/>
    <property type="evidence" value="ECO:0007669"/>
    <property type="project" value="UniProtKB-UniRule"/>
</dbReference>
<dbReference type="GO" id="GO:0035999">
    <property type="term" value="P:tetrahydrofolate interconversion"/>
    <property type="evidence" value="ECO:0007669"/>
    <property type="project" value="UniProtKB-UniRule"/>
</dbReference>
<dbReference type="CDD" id="cd00378">
    <property type="entry name" value="SHMT"/>
    <property type="match status" value="1"/>
</dbReference>
<dbReference type="FunFam" id="3.40.640.10:FF:000001">
    <property type="entry name" value="Serine hydroxymethyltransferase"/>
    <property type="match status" value="1"/>
</dbReference>
<dbReference type="FunFam" id="3.90.1150.10:FF:000003">
    <property type="entry name" value="Serine hydroxymethyltransferase"/>
    <property type="match status" value="1"/>
</dbReference>
<dbReference type="Gene3D" id="3.90.1150.10">
    <property type="entry name" value="Aspartate Aminotransferase, domain 1"/>
    <property type="match status" value="1"/>
</dbReference>
<dbReference type="Gene3D" id="3.40.640.10">
    <property type="entry name" value="Type I PLP-dependent aspartate aminotransferase-like (Major domain)"/>
    <property type="match status" value="1"/>
</dbReference>
<dbReference type="HAMAP" id="MF_00051">
    <property type="entry name" value="SHMT"/>
    <property type="match status" value="1"/>
</dbReference>
<dbReference type="InterPro" id="IPR015424">
    <property type="entry name" value="PyrdxlP-dep_Trfase"/>
</dbReference>
<dbReference type="InterPro" id="IPR015421">
    <property type="entry name" value="PyrdxlP-dep_Trfase_major"/>
</dbReference>
<dbReference type="InterPro" id="IPR015422">
    <property type="entry name" value="PyrdxlP-dep_Trfase_small"/>
</dbReference>
<dbReference type="InterPro" id="IPR001085">
    <property type="entry name" value="Ser_HO-MeTrfase"/>
</dbReference>
<dbReference type="InterPro" id="IPR049943">
    <property type="entry name" value="Ser_HO-MeTrfase-like"/>
</dbReference>
<dbReference type="InterPro" id="IPR019798">
    <property type="entry name" value="Ser_HO-MeTrfase_PLP_BS"/>
</dbReference>
<dbReference type="InterPro" id="IPR039429">
    <property type="entry name" value="SHMT-like_dom"/>
</dbReference>
<dbReference type="NCBIfam" id="NF000586">
    <property type="entry name" value="PRK00011.1"/>
    <property type="match status" value="1"/>
</dbReference>
<dbReference type="PANTHER" id="PTHR11680">
    <property type="entry name" value="SERINE HYDROXYMETHYLTRANSFERASE"/>
    <property type="match status" value="1"/>
</dbReference>
<dbReference type="PANTHER" id="PTHR11680:SF50">
    <property type="entry name" value="SERINE HYDROXYMETHYLTRANSFERASE"/>
    <property type="match status" value="1"/>
</dbReference>
<dbReference type="Pfam" id="PF00464">
    <property type="entry name" value="SHMT"/>
    <property type="match status" value="1"/>
</dbReference>
<dbReference type="PIRSF" id="PIRSF000412">
    <property type="entry name" value="SHMT"/>
    <property type="match status" value="1"/>
</dbReference>
<dbReference type="SUPFAM" id="SSF53383">
    <property type="entry name" value="PLP-dependent transferases"/>
    <property type="match status" value="1"/>
</dbReference>
<dbReference type="PROSITE" id="PS00096">
    <property type="entry name" value="SHMT"/>
    <property type="match status" value="1"/>
</dbReference>
<organism>
    <name type="scientific">Salmonella schwarzengrund (strain CVM19633)</name>
    <dbReference type="NCBI Taxonomy" id="439843"/>
    <lineage>
        <taxon>Bacteria</taxon>
        <taxon>Pseudomonadati</taxon>
        <taxon>Pseudomonadota</taxon>
        <taxon>Gammaproteobacteria</taxon>
        <taxon>Enterobacterales</taxon>
        <taxon>Enterobacteriaceae</taxon>
        <taxon>Salmonella</taxon>
    </lineage>
</organism>
<sequence length="417" mass="45469">MLKREMNIADYDAELWQAMEQEKVRQEEHIELIASENYTSPRVMQAQGSQLTNKYAEGYPGKRYYGGCEYVDIVEQLAIDRAKELFGADYANVQPHSGSQANFAVYTALLQPGDTVLGMNLAQGGHLTHGSPVNFSGKLYNIVPYGIDESGKIDYDEMAKLAKEHKPKMIIGGFSAYSGVVDWAKMREIADSIGAYLFVDMAHVAGLIAAGVYPNPVPHAHVVTTTTHKTLAGPRGGLILAKGGDEELYKKLNSAVFPSAQGGPLMHVIAGKAVALKEAMEPEFKVYQQQVAKNAKAMVEVFLNRGYKVVSGGTENHLFLLDLVDKNLTGKEADAALGRANITVNKNSVPNDPKSPFVTSGIRIGSPAVTRRGFKEAEVKELAGWMCDVLDNINDEATIERVKAKVLDICARFPVYA</sequence>
<comment type="function">
    <text evidence="1">Catalyzes the reversible interconversion of serine and glycine with tetrahydrofolate (THF) serving as the one-carbon carrier. This reaction serves as the major source of one-carbon groups required for the biosynthesis of purines, thymidylate, methionine, and other important biomolecules. Also exhibits THF-independent aldolase activity toward beta-hydroxyamino acids, producing glycine and aldehydes, via a retro-aldol mechanism.</text>
</comment>
<comment type="catalytic activity">
    <reaction evidence="1">
        <text>(6R)-5,10-methylene-5,6,7,8-tetrahydrofolate + glycine + H2O = (6S)-5,6,7,8-tetrahydrofolate + L-serine</text>
        <dbReference type="Rhea" id="RHEA:15481"/>
        <dbReference type="ChEBI" id="CHEBI:15377"/>
        <dbReference type="ChEBI" id="CHEBI:15636"/>
        <dbReference type="ChEBI" id="CHEBI:33384"/>
        <dbReference type="ChEBI" id="CHEBI:57305"/>
        <dbReference type="ChEBI" id="CHEBI:57453"/>
        <dbReference type="EC" id="2.1.2.1"/>
    </reaction>
</comment>
<comment type="cofactor">
    <cofactor evidence="1">
        <name>pyridoxal 5'-phosphate</name>
        <dbReference type="ChEBI" id="CHEBI:597326"/>
    </cofactor>
</comment>
<comment type="pathway">
    <text evidence="1">One-carbon metabolism; tetrahydrofolate interconversion.</text>
</comment>
<comment type="pathway">
    <text evidence="1">Amino-acid biosynthesis; glycine biosynthesis; glycine from L-serine: step 1/1.</text>
</comment>
<comment type="subunit">
    <text evidence="1">Homodimer.</text>
</comment>
<comment type="subcellular location">
    <subcellularLocation>
        <location evidence="1">Cytoplasm</location>
    </subcellularLocation>
</comment>
<comment type="similarity">
    <text evidence="1">Belongs to the SHMT family.</text>
</comment>
<accession>B4TRY8</accession>
<proteinExistence type="inferred from homology"/>
<feature type="chain" id="PRO_1000091577" description="Serine hydroxymethyltransferase">
    <location>
        <begin position="1"/>
        <end position="417"/>
    </location>
</feature>
<feature type="binding site" evidence="1">
    <location>
        <position position="121"/>
    </location>
    <ligand>
        <name>(6S)-5,6,7,8-tetrahydrofolate</name>
        <dbReference type="ChEBI" id="CHEBI:57453"/>
    </ligand>
</feature>
<feature type="binding site" evidence="1">
    <location>
        <begin position="125"/>
        <end position="127"/>
    </location>
    <ligand>
        <name>(6S)-5,6,7,8-tetrahydrofolate</name>
        <dbReference type="ChEBI" id="CHEBI:57453"/>
    </ligand>
</feature>
<feature type="binding site" evidence="1">
    <location>
        <begin position="355"/>
        <end position="357"/>
    </location>
    <ligand>
        <name>(6S)-5,6,7,8-tetrahydrofolate</name>
        <dbReference type="ChEBI" id="CHEBI:57453"/>
    </ligand>
</feature>
<feature type="site" description="Plays an important role in substrate specificity" evidence="1">
    <location>
        <position position="228"/>
    </location>
</feature>
<feature type="modified residue" description="N6-(pyridoxal phosphate)lysine" evidence="1">
    <location>
        <position position="229"/>
    </location>
</feature>
<protein>
    <recommendedName>
        <fullName evidence="1">Serine hydroxymethyltransferase</fullName>
        <shortName evidence="1">SHMT</shortName>
        <shortName evidence="1">Serine methylase</shortName>
        <ecNumber evidence="1">2.1.2.1</ecNumber>
    </recommendedName>
</protein>
<reference key="1">
    <citation type="journal article" date="2011" name="J. Bacteriol.">
        <title>Comparative genomics of 28 Salmonella enterica isolates: evidence for CRISPR-mediated adaptive sublineage evolution.</title>
        <authorList>
            <person name="Fricke W.F."/>
            <person name="Mammel M.K."/>
            <person name="McDermott P.F."/>
            <person name="Tartera C."/>
            <person name="White D.G."/>
            <person name="Leclerc J.E."/>
            <person name="Ravel J."/>
            <person name="Cebula T.A."/>
        </authorList>
    </citation>
    <scope>NUCLEOTIDE SEQUENCE [LARGE SCALE GENOMIC DNA]</scope>
    <source>
        <strain>CVM19633</strain>
    </source>
</reference>
<name>GLYA_SALSV</name>
<evidence type="ECO:0000255" key="1">
    <source>
        <dbReference type="HAMAP-Rule" id="MF_00051"/>
    </source>
</evidence>
<keyword id="KW-0028">Amino-acid biosynthesis</keyword>
<keyword id="KW-0963">Cytoplasm</keyword>
<keyword id="KW-0554">One-carbon metabolism</keyword>
<keyword id="KW-0663">Pyridoxal phosphate</keyword>
<keyword id="KW-0808">Transferase</keyword>